<keyword id="KW-0963">Cytoplasm</keyword>
<keyword id="KW-0378">Hydrolase</keyword>
<keyword id="KW-0645">Protease</keyword>
<keyword id="KW-1185">Reference proteome</keyword>
<keyword id="KW-0720">Serine protease</keyword>
<sequence length="204" mass="22606">MSFDNHLVPTVIEQSGRGERAFDIYSRLLKERIVFLVGPVTDESANLVVAQLLFLESENPDKDIFFYINSPGGSVTAGMSIYDTMNFIKPDVSTLCLGQAASMGAFLLSAGEKGKRFALPNSRIMIHQPLISGGLGGQASDIEIHARELLKIKEKLNRLMAKHCGRDLADLERDTDRDNFMSAEEAKEYGLIDQVLENRASLRL</sequence>
<evidence type="ECO:0000255" key="1">
    <source>
        <dbReference type="HAMAP-Rule" id="MF_00444"/>
    </source>
</evidence>
<organism>
    <name type="scientific">Neisseria gonorrhoeae (strain ATCC 700825 / FA 1090)</name>
    <dbReference type="NCBI Taxonomy" id="242231"/>
    <lineage>
        <taxon>Bacteria</taxon>
        <taxon>Pseudomonadati</taxon>
        <taxon>Pseudomonadota</taxon>
        <taxon>Betaproteobacteria</taxon>
        <taxon>Neisseriales</taxon>
        <taxon>Neisseriaceae</taxon>
        <taxon>Neisseria</taxon>
    </lineage>
</organism>
<comment type="function">
    <text evidence="1">Cleaves peptides in various proteins in a process that requires ATP hydrolysis. Has a chymotrypsin-like activity. Plays a major role in the degradation of misfolded proteins.</text>
</comment>
<comment type="catalytic activity">
    <reaction evidence="1">
        <text>Hydrolysis of proteins to small peptides in the presence of ATP and magnesium. alpha-casein is the usual test substrate. In the absence of ATP, only oligopeptides shorter than five residues are hydrolyzed (such as succinyl-Leu-Tyr-|-NHMec, and Leu-Tyr-Leu-|-Tyr-Trp, in which cleavage of the -Tyr-|-Leu- and -Tyr-|-Trp bonds also occurs).</text>
        <dbReference type="EC" id="3.4.21.92"/>
    </reaction>
</comment>
<comment type="subunit">
    <text evidence="1">Fourteen ClpP subunits assemble into 2 heptameric rings which stack back to back to give a disk-like structure with a central cavity, resembling the structure of eukaryotic proteasomes.</text>
</comment>
<comment type="subcellular location">
    <subcellularLocation>
        <location evidence="1">Cytoplasm</location>
    </subcellularLocation>
</comment>
<comment type="similarity">
    <text evidence="1">Belongs to the peptidase S14 family.</text>
</comment>
<gene>
    <name evidence="1" type="primary">clpP</name>
    <name type="ordered locus">NGO_0593</name>
</gene>
<protein>
    <recommendedName>
        <fullName evidence="1">ATP-dependent Clp protease proteolytic subunit</fullName>
        <ecNumber evidence="1">3.4.21.92</ecNumber>
    </recommendedName>
    <alternativeName>
        <fullName evidence="1">Endopeptidase Clp</fullName>
    </alternativeName>
</protein>
<proteinExistence type="inferred from homology"/>
<accession>Q5F914</accession>
<dbReference type="EC" id="3.4.21.92" evidence="1"/>
<dbReference type="EMBL" id="AE004969">
    <property type="protein sequence ID" value="AAW89323.1"/>
    <property type="molecule type" value="Genomic_DNA"/>
</dbReference>
<dbReference type="RefSeq" id="WP_003688955.1">
    <property type="nucleotide sequence ID" value="NC_002946.2"/>
</dbReference>
<dbReference type="RefSeq" id="YP_207735.1">
    <property type="nucleotide sequence ID" value="NC_002946.2"/>
</dbReference>
<dbReference type="SMR" id="Q5F914"/>
<dbReference type="STRING" id="242231.NGO_0593"/>
<dbReference type="MEROPS" id="S14.001"/>
<dbReference type="GeneID" id="66752932"/>
<dbReference type="KEGG" id="ngo:NGO_0593"/>
<dbReference type="PATRIC" id="fig|242231.10.peg.702"/>
<dbReference type="HOGENOM" id="CLU_058707_3_2_4"/>
<dbReference type="Proteomes" id="UP000000535">
    <property type="component" value="Chromosome"/>
</dbReference>
<dbReference type="GO" id="GO:0005737">
    <property type="term" value="C:cytoplasm"/>
    <property type="evidence" value="ECO:0007669"/>
    <property type="project" value="UniProtKB-SubCell"/>
</dbReference>
<dbReference type="GO" id="GO:0009368">
    <property type="term" value="C:endopeptidase Clp complex"/>
    <property type="evidence" value="ECO:0007669"/>
    <property type="project" value="TreeGrafter"/>
</dbReference>
<dbReference type="GO" id="GO:0004176">
    <property type="term" value="F:ATP-dependent peptidase activity"/>
    <property type="evidence" value="ECO:0007669"/>
    <property type="project" value="InterPro"/>
</dbReference>
<dbReference type="GO" id="GO:0051117">
    <property type="term" value="F:ATPase binding"/>
    <property type="evidence" value="ECO:0007669"/>
    <property type="project" value="TreeGrafter"/>
</dbReference>
<dbReference type="GO" id="GO:0004252">
    <property type="term" value="F:serine-type endopeptidase activity"/>
    <property type="evidence" value="ECO:0007669"/>
    <property type="project" value="UniProtKB-UniRule"/>
</dbReference>
<dbReference type="GO" id="GO:0006515">
    <property type="term" value="P:protein quality control for misfolded or incompletely synthesized proteins"/>
    <property type="evidence" value="ECO:0007669"/>
    <property type="project" value="TreeGrafter"/>
</dbReference>
<dbReference type="CDD" id="cd07017">
    <property type="entry name" value="S14_ClpP_2"/>
    <property type="match status" value="1"/>
</dbReference>
<dbReference type="FunFam" id="3.90.226.10:FF:000001">
    <property type="entry name" value="ATP-dependent Clp protease proteolytic subunit"/>
    <property type="match status" value="1"/>
</dbReference>
<dbReference type="Gene3D" id="3.90.226.10">
    <property type="entry name" value="2-enoyl-CoA Hydratase, Chain A, domain 1"/>
    <property type="match status" value="1"/>
</dbReference>
<dbReference type="HAMAP" id="MF_00444">
    <property type="entry name" value="ClpP"/>
    <property type="match status" value="1"/>
</dbReference>
<dbReference type="InterPro" id="IPR001907">
    <property type="entry name" value="ClpP"/>
</dbReference>
<dbReference type="InterPro" id="IPR029045">
    <property type="entry name" value="ClpP/crotonase-like_dom_sf"/>
</dbReference>
<dbReference type="InterPro" id="IPR023562">
    <property type="entry name" value="ClpP/TepA"/>
</dbReference>
<dbReference type="InterPro" id="IPR033135">
    <property type="entry name" value="ClpP_His_AS"/>
</dbReference>
<dbReference type="InterPro" id="IPR018215">
    <property type="entry name" value="ClpP_Ser_AS"/>
</dbReference>
<dbReference type="NCBIfam" id="TIGR00493">
    <property type="entry name" value="clpP"/>
    <property type="match status" value="1"/>
</dbReference>
<dbReference type="NCBIfam" id="NF001368">
    <property type="entry name" value="PRK00277.1"/>
    <property type="match status" value="1"/>
</dbReference>
<dbReference type="NCBIfam" id="NF009205">
    <property type="entry name" value="PRK12553.1"/>
    <property type="match status" value="1"/>
</dbReference>
<dbReference type="PANTHER" id="PTHR10381">
    <property type="entry name" value="ATP-DEPENDENT CLP PROTEASE PROTEOLYTIC SUBUNIT"/>
    <property type="match status" value="1"/>
</dbReference>
<dbReference type="PANTHER" id="PTHR10381:SF70">
    <property type="entry name" value="ATP-DEPENDENT CLP PROTEASE PROTEOLYTIC SUBUNIT"/>
    <property type="match status" value="1"/>
</dbReference>
<dbReference type="Pfam" id="PF00574">
    <property type="entry name" value="CLP_protease"/>
    <property type="match status" value="1"/>
</dbReference>
<dbReference type="PRINTS" id="PR00127">
    <property type="entry name" value="CLPPROTEASEP"/>
</dbReference>
<dbReference type="SUPFAM" id="SSF52096">
    <property type="entry name" value="ClpP/crotonase"/>
    <property type="match status" value="1"/>
</dbReference>
<dbReference type="PROSITE" id="PS00382">
    <property type="entry name" value="CLP_PROTEASE_HIS"/>
    <property type="match status" value="1"/>
</dbReference>
<dbReference type="PROSITE" id="PS00381">
    <property type="entry name" value="CLP_PROTEASE_SER"/>
    <property type="match status" value="1"/>
</dbReference>
<reference key="1">
    <citation type="submission" date="2003-03" db="EMBL/GenBank/DDBJ databases">
        <title>The complete genome sequence of Neisseria gonorrhoeae.</title>
        <authorList>
            <person name="Lewis L.A."/>
            <person name="Gillaspy A.F."/>
            <person name="McLaughlin R.E."/>
            <person name="Gipson M."/>
            <person name="Ducey T.F."/>
            <person name="Ownbey T."/>
            <person name="Hartman K."/>
            <person name="Nydick C."/>
            <person name="Carson M.B."/>
            <person name="Vaughn J."/>
            <person name="Thomson C."/>
            <person name="Song L."/>
            <person name="Lin S."/>
            <person name="Yuan X."/>
            <person name="Najar F."/>
            <person name="Zhan M."/>
            <person name="Ren Q."/>
            <person name="Zhu H."/>
            <person name="Qi S."/>
            <person name="Kenton S.M."/>
            <person name="Lai H."/>
            <person name="White J.D."/>
            <person name="Clifton S."/>
            <person name="Roe B.A."/>
            <person name="Dyer D.W."/>
        </authorList>
    </citation>
    <scope>NUCLEOTIDE SEQUENCE [LARGE SCALE GENOMIC DNA]</scope>
    <source>
        <strain>ATCC 700825 / FA 1090</strain>
    </source>
</reference>
<feature type="chain" id="PRO_0000179600" description="ATP-dependent Clp protease proteolytic subunit">
    <location>
        <begin position="1"/>
        <end position="204"/>
    </location>
</feature>
<feature type="active site" description="Nucleophile" evidence="1">
    <location>
        <position position="102"/>
    </location>
</feature>
<feature type="active site" evidence="1">
    <location>
        <position position="127"/>
    </location>
</feature>
<name>CLPP_NEIG1</name>